<evidence type="ECO:0000250" key="1"/>
<evidence type="ECO:0000255" key="2"/>
<evidence type="ECO:0000269" key="3">
    <source>
    </source>
</evidence>
<evidence type="ECO:0000305" key="4"/>
<sequence length="337" mass="36848">MHSLPVNLVLTVLTVFLTSPAQVIGYRPYPPKTNGSDQIFDASKKFEGSSNLVRLRYHMGPVLTNNITVHPIWYGTWQKSQKKIIREFINSISAVGSKHPSVSGWWKTVQLYTDQTGSNITGTVRLGEEKNDRFYSHGKSLTRLSIQSVIKSAVTSRSRPLPVNPKSGLYLLLTADDVYVQDFCGQVCGFHYFTFPSIVGFTLPYAWVGNSAKLCPGVCAYPFAVPAFIPGLKPVKSPNGDVGVDGMISVIAHEIAELATNPLVNAWYAGPDPVAPVEIADLCEGIYGTGGGGSYTGQMLNDHSGATYNVNGIRRRYLIQWLWSHVVSYCTGPNALD</sequence>
<comment type="function">
    <text evidence="1">May play a role in a brassinosteroid-dependent regulation of growth and development.</text>
</comment>
<comment type="subcellular location">
    <subcellularLocation>
        <location>Secreted</location>
    </subcellularLocation>
    <subcellularLocation>
        <location>Secreted</location>
        <location>Extracellular space</location>
    </subcellularLocation>
    <subcellularLocation>
        <location evidence="4">Secreted</location>
        <location evidence="4">Extracellular space</location>
        <location evidence="4">Apoplast</location>
    </subcellularLocation>
</comment>
<comment type="induction">
    <text evidence="3">By brassinolide.</text>
</comment>
<comment type="similarity">
    <text evidence="4">Belongs to the EXORDIUM family.</text>
</comment>
<dbReference type="EMBL" id="AB018109">
    <property type="protein sequence ID" value="BAB08671.1"/>
    <property type="molecule type" value="Genomic_DNA"/>
</dbReference>
<dbReference type="EMBL" id="CP002688">
    <property type="protein sequence ID" value="AED96097.1"/>
    <property type="molecule type" value="Genomic_DNA"/>
</dbReference>
<dbReference type="EMBL" id="AF428325">
    <property type="protein sequence ID" value="AAL16255.1"/>
    <property type="molecule type" value="mRNA"/>
</dbReference>
<dbReference type="EMBL" id="AY058883">
    <property type="protein sequence ID" value="AAL24269.1"/>
    <property type="molecule type" value="mRNA"/>
</dbReference>
<dbReference type="EMBL" id="AY103306">
    <property type="protein sequence ID" value="AAM65358.1"/>
    <property type="molecule type" value="mRNA"/>
</dbReference>
<dbReference type="EMBL" id="AY087269">
    <property type="protein sequence ID" value="AAM64823.1"/>
    <property type="molecule type" value="mRNA"/>
</dbReference>
<dbReference type="RefSeq" id="NP_199968.1">
    <property type="nucleotide sequence ID" value="NM_124534.3"/>
</dbReference>
<dbReference type="FunCoup" id="Q9FHM9">
    <property type="interactions" value="28"/>
</dbReference>
<dbReference type="STRING" id="3702.Q9FHM9"/>
<dbReference type="GlyCosmos" id="Q9FHM9">
    <property type="glycosylation" value="3 sites, No reported glycans"/>
</dbReference>
<dbReference type="GlyGen" id="Q9FHM9">
    <property type="glycosylation" value="3 sites"/>
</dbReference>
<dbReference type="iPTMnet" id="Q9FHM9"/>
<dbReference type="PaxDb" id="3702-AT5G51550.1"/>
<dbReference type="ProteomicsDB" id="222236"/>
<dbReference type="EnsemblPlants" id="AT5G51550.1">
    <property type="protein sequence ID" value="AT5G51550.1"/>
    <property type="gene ID" value="AT5G51550"/>
</dbReference>
<dbReference type="GeneID" id="835229"/>
<dbReference type="Gramene" id="AT5G51550.1">
    <property type="protein sequence ID" value="AT5G51550.1"/>
    <property type="gene ID" value="AT5G51550"/>
</dbReference>
<dbReference type="KEGG" id="ath:AT5G51550"/>
<dbReference type="Araport" id="AT5G51550"/>
<dbReference type="TAIR" id="AT5G51550">
    <property type="gene designation" value="EXL3"/>
</dbReference>
<dbReference type="eggNOG" id="ENOG502QQ2C">
    <property type="taxonomic scope" value="Eukaryota"/>
</dbReference>
<dbReference type="HOGENOM" id="CLU_053777_0_0_1"/>
<dbReference type="InParanoid" id="Q9FHM9"/>
<dbReference type="OMA" id="SHVVSYC"/>
<dbReference type="OrthoDB" id="2016249at2759"/>
<dbReference type="PRO" id="PR:Q9FHM9"/>
<dbReference type="Proteomes" id="UP000006548">
    <property type="component" value="Chromosome 5"/>
</dbReference>
<dbReference type="ExpressionAtlas" id="Q9FHM9">
    <property type="expression patterns" value="baseline and differential"/>
</dbReference>
<dbReference type="GO" id="GO:0048046">
    <property type="term" value="C:apoplast"/>
    <property type="evidence" value="ECO:0007669"/>
    <property type="project" value="UniProtKB-SubCell"/>
</dbReference>
<dbReference type="GO" id="GO:0009505">
    <property type="term" value="C:plant-type cell wall"/>
    <property type="evidence" value="ECO:0007005"/>
    <property type="project" value="TAIR"/>
</dbReference>
<dbReference type="GO" id="GO:0009506">
    <property type="term" value="C:plasmodesma"/>
    <property type="evidence" value="ECO:0007005"/>
    <property type="project" value="TAIR"/>
</dbReference>
<dbReference type="InterPro" id="IPR006766">
    <property type="entry name" value="EXORDIUM-like"/>
</dbReference>
<dbReference type="PANTHER" id="PTHR31279:SF7">
    <property type="entry name" value="PROTEIN EXORDIUM-LIKE 3"/>
    <property type="match status" value="1"/>
</dbReference>
<dbReference type="PANTHER" id="PTHR31279">
    <property type="entry name" value="PROTEIN EXORDIUM-LIKE 5"/>
    <property type="match status" value="1"/>
</dbReference>
<dbReference type="Pfam" id="PF04674">
    <property type="entry name" value="Phi_1"/>
    <property type="match status" value="1"/>
</dbReference>
<keyword id="KW-0052">Apoplast</keyword>
<keyword id="KW-0325">Glycoprotein</keyword>
<keyword id="KW-1185">Reference proteome</keyword>
<keyword id="KW-0964">Secreted</keyword>
<keyword id="KW-0732">Signal</keyword>
<gene>
    <name type="primary">EXL3</name>
    <name type="ordered locus">At5g51550</name>
    <name type="ORF">K17N15.10</name>
</gene>
<proteinExistence type="evidence at transcript level"/>
<accession>Q9FHM9</accession>
<accession>Q8LBE0</accession>
<accession>Q93YZ5</accession>
<organism>
    <name type="scientific">Arabidopsis thaliana</name>
    <name type="common">Mouse-ear cress</name>
    <dbReference type="NCBI Taxonomy" id="3702"/>
    <lineage>
        <taxon>Eukaryota</taxon>
        <taxon>Viridiplantae</taxon>
        <taxon>Streptophyta</taxon>
        <taxon>Embryophyta</taxon>
        <taxon>Tracheophyta</taxon>
        <taxon>Spermatophyta</taxon>
        <taxon>Magnoliopsida</taxon>
        <taxon>eudicotyledons</taxon>
        <taxon>Gunneridae</taxon>
        <taxon>Pentapetalae</taxon>
        <taxon>rosids</taxon>
        <taxon>malvids</taxon>
        <taxon>Brassicales</taxon>
        <taxon>Brassicaceae</taxon>
        <taxon>Camelineae</taxon>
        <taxon>Arabidopsis</taxon>
    </lineage>
</organism>
<name>EXOL3_ARATH</name>
<feature type="signal peptide" evidence="2">
    <location>
        <begin position="1"/>
        <end position="25"/>
    </location>
</feature>
<feature type="chain" id="PRO_0000430283" description="Protein EXORDIUM-like 3">
    <location>
        <begin position="26"/>
        <end position="337"/>
    </location>
</feature>
<feature type="glycosylation site" description="N-linked (GlcNAc...) asparagine" evidence="2">
    <location>
        <position position="34"/>
    </location>
</feature>
<feature type="glycosylation site" description="N-linked (GlcNAc...) asparagine" evidence="2">
    <location>
        <position position="66"/>
    </location>
</feature>
<feature type="glycosylation site" description="N-linked (GlcNAc...) asparagine" evidence="2">
    <location>
        <position position="119"/>
    </location>
</feature>
<feature type="sequence conflict" description="In Ref. 3; AAL24269/AAM65358." evidence="4" ref="3">
    <original>V</original>
    <variation>I</variation>
    <location>
        <position position="12"/>
    </location>
</feature>
<protein>
    <recommendedName>
        <fullName>Protein EXORDIUM-like 3</fullName>
    </recommendedName>
</protein>
<reference key="1">
    <citation type="journal article" date="2000" name="DNA Res.">
        <title>Structural analysis of Arabidopsis thaliana chromosome 5. X. Sequence features of the regions of 3,076,755 bp covered by sixty P1 and TAC clones.</title>
        <authorList>
            <person name="Sato S."/>
            <person name="Nakamura Y."/>
            <person name="Kaneko T."/>
            <person name="Katoh T."/>
            <person name="Asamizu E."/>
            <person name="Kotani H."/>
            <person name="Tabata S."/>
        </authorList>
    </citation>
    <scope>NUCLEOTIDE SEQUENCE [LARGE SCALE GENOMIC DNA]</scope>
    <source>
        <strain>cv. Columbia</strain>
    </source>
</reference>
<reference key="2">
    <citation type="journal article" date="2017" name="Plant J.">
        <title>Araport11: a complete reannotation of the Arabidopsis thaliana reference genome.</title>
        <authorList>
            <person name="Cheng C.Y."/>
            <person name="Krishnakumar V."/>
            <person name="Chan A.P."/>
            <person name="Thibaud-Nissen F."/>
            <person name="Schobel S."/>
            <person name="Town C.D."/>
        </authorList>
    </citation>
    <scope>GENOME REANNOTATION</scope>
    <source>
        <strain>cv. Columbia</strain>
    </source>
</reference>
<reference key="3">
    <citation type="journal article" date="2003" name="Science">
        <title>Empirical analysis of transcriptional activity in the Arabidopsis genome.</title>
        <authorList>
            <person name="Yamada K."/>
            <person name="Lim J."/>
            <person name="Dale J.M."/>
            <person name="Chen H."/>
            <person name="Shinn P."/>
            <person name="Palm C.J."/>
            <person name="Southwick A.M."/>
            <person name="Wu H.C."/>
            <person name="Kim C.J."/>
            <person name="Nguyen M."/>
            <person name="Pham P.K."/>
            <person name="Cheuk R.F."/>
            <person name="Karlin-Newmann G."/>
            <person name="Liu S.X."/>
            <person name="Lam B."/>
            <person name="Sakano H."/>
            <person name="Wu T."/>
            <person name="Yu G."/>
            <person name="Miranda M."/>
            <person name="Quach H.L."/>
            <person name="Tripp M."/>
            <person name="Chang C.H."/>
            <person name="Lee J.M."/>
            <person name="Toriumi M.J."/>
            <person name="Chan M.M."/>
            <person name="Tang C.C."/>
            <person name="Onodera C.S."/>
            <person name="Deng J.M."/>
            <person name="Akiyama K."/>
            <person name="Ansari Y."/>
            <person name="Arakawa T."/>
            <person name="Banh J."/>
            <person name="Banno F."/>
            <person name="Bowser L."/>
            <person name="Brooks S.Y."/>
            <person name="Carninci P."/>
            <person name="Chao Q."/>
            <person name="Choy N."/>
            <person name="Enju A."/>
            <person name="Goldsmith A.D."/>
            <person name="Gurjal M."/>
            <person name="Hansen N.F."/>
            <person name="Hayashizaki Y."/>
            <person name="Johnson-Hopson C."/>
            <person name="Hsuan V.W."/>
            <person name="Iida K."/>
            <person name="Karnes M."/>
            <person name="Khan S."/>
            <person name="Koesema E."/>
            <person name="Ishida J."/>
            <person name="Jiang P.X."/>
            <person name="Jones T."/>
            <person name="Kawai J."/>
            <person name="Kamiya A."/>
            <person name="Meyers C."/>
            <person name="Nakajima M."/>
            <person name="Narusaka M."/>
            <person name="Seki M."/>
            <person name="Sakurai T."/>
            <person name="Satou M."/>
            <person name="Tamse R."/>
            <person name="Vaysberg M."/>
            <person name="Wallender E.K."/>
            <person name="Wong C."/>
            <person name="Yamamura Y."/>
            <person name="Yuan S."/>
            <person name="Shinozaki K."/>
            <person name="Davis R.W."/>
            <person name="Theologis A."/>
            <person name="Ecker J.R."/>
        </authorList>
    </citation>
    <scope>NUCLEOTIDE SEQUENCE [LARGE SCALE MRNA]</scope>
    <source>
        <strain>cv. Columbia</strain>
    </source>
</reference>
<reference key="4">
    <citation type="submission" date="2002-03" db="EMBL/GenBank/DDBJ databases">
        <title>Full-length cDNA from Arabidopsis thaliana.</title>
        <authorList>
            <person name="Brover V.V."/>
            <person name="Troukhan M.E."/>
            <person name="Alexandrov N.A."/>
            <person name="Lu Y.-P."/>
            <person name="Flavell R.B."/>
            <person name="Feldmann K.A."/>
        </authorList>
    </citation>
    <scope>NUCLEOTIDE SEQUENCE [LARGE SCALE MRNA]</scope>
</reference>
<reference key="5">
    <citation type="journal article" date="2009" name="BMC Plant Biol.">
        <title>The extracellular EXO protein mediates cell expansion in Arabidopsis leaves.</title>
        <authorList>
            <person name="Schroder F."/>
            <person name="Lisso J."/>
            <person name="Lange P."/>
            <person name="Mussig C."/>
        </authorList>
    </citation>
    <scope>INDUCTION BY BRASSINOLIDE</scope>
    <scope>GENE FAMILY</scope>
    <scope>NOMENCLATURE</scope>
</reference>